<reference key="1">
    <citation type="journal article" date="1998" name="Science">
        <title>Genome sequence of the nematode C. elegans: a platform for investigating biology.</title>
        <authorList>
            <consortium name="The C. elegans sequencing consortium"/>
        </authorList>
    </citation>
    <scope>NUCLEOTIDE SEQUENCE [LARGE SCALE GENOMIC DNA]</scope>
    <source>
        <strain>Bristol N2</strain>
    </source>
</reference>
<reference key="2">
    <citation type="journal article" date="2003" name="Nat. Biotechnol.">
        <title>Lectin affinity capture, isotope-coded tagging and mass spectrometry to identify N-linked glycoproteins.</title>
        <authorList>
            <person name="Kaji H."/>
            <person name="Saito H."/>
            <person name="Yamauchi Y."/>
            <person name="Shinkawa T."/>
            <person name="Taoka M."/>
            <person name="Hirabayashi J."/>
            <person name="Kasai K."/>
            <person name="Takahashi N."/>
            <person name="Isobe T."/>
        </authorList>
    </citation>
    <scope>GLYCOSYLATION [LARGE SCALE ANALYSIS] AT ASN-34</scope>
    <scope>IDENTIFICATION BY MASS SPECTROMETRY</scope>
    <source>
        <strain>Bristol N2</strain>
    </source>
</reference>
<reference key="3">
    <citation type="journal article" date="2007" name="Mol. Cell. Proteomics">
        <title>Proteomics reveals N-linked glycoprotein diversity in Caenorhabditis elegans and suggests an atypical translocation mechanism for integral membrane proteins.</title>
        <authorList>
            <person name="Kaji H."/>
            <person name="Kamiie J."/>
            <person name="Kawakami H."/>
            <person name="Kido K."/>
            <person name="Yamauchi Y."/>
            <person name="Shinkawa T."/>
            <person name="Taoka M."/>
            <person name="Takahashi N."/>
            <person name="Isobe T."/>
        </authorList>
    </citation>
    <scope>GLYCOSYLATION [LARGE SCALE ANALYSIS] AT ASN-34</scope>
    <scope>IDENTIFICATION BY MASS SPECTROMETRY</scope>
    <source>
        <strain>Bristol N2</strain>
    </source>
</reference>
<sequence length="176" mass="19578">MLFFTLLIQLFLVPVLCQYACSSELKFGTACSENKTSTKWYYDSKLLFCYPYKYLGCGEGSNSFESNENCLESCKPADQFSCGGNTGPDGVCFAHGDQGCKKGTVCVMGGMVGFCCDKKIQDEWNKENSPKCLKGQVVQFKQWFGMTPLIGRSCSHNFCPEKSTCVQGKWTAYCCQ</sequence>
<protein>
    <recommendedName>
        <fullName>BPTI/Kunitz inhibitor domain-containing protein C02F12.5</fullName>
    </recommendedName>
</protein>
<name>YL15_CAEEL</name>
<organism>
    <name type="scientific">Caenorhabditis elegans</name>
    <dbReference type="NCBI Taxonomy" id="6239"/>
    <lineage>
        <taxon>Eukaryota</taxon>
        <taxon>Metazoa</taxon>
        <taxon>Ecdysozoa</taxon>
        <taxon>Nematoda</taxon>
        <taxon>Chromadorea</taxon>
        <taxon>Rhabditida</taxon>
        <taxon>Rhabditina</taxon>
        <taxon>Rhabditomorpha</taxon>
        <taxon>Rhabditoidea</taxon>
        <taxon>Rhabditidae</taxon>
        <taxon>Peloderinae</taxon>
        <taxon>Caenorhabditis</taxon>
    </lineage>
</organism>
<keyword id="KW-1015">Disulfide bond</keyword>
<keyword id="KW-0325">Glycoprotein</keyword>
<keyword id="KW-0646">Protease inhibitor</keyword>
<keyword id="KW-1185">Reference proteome</keyword>
<keyword id="KW-0722">Serine protease inhibitor</keyword>
<keyword id="KW-0732">Signal</keyword>
<feature type="signal peptide" evidence="1">
    <location>
        <begin position="1"/>
        <end position="17"/>
    </location>
</feature>
<feature type="chain" id="PRO_0000417920" description="BPTI/Kunitz inhibitor domain-containing protein C02F12.5">
    <location>
        <begin position="18"/>
        <end position="176"/>
    </location>
</feature>
<feature type="domain" description="BPTI/Kunitz inhibitor" evidence="2">
    <location>
        <begin position="21"/>
        <end position="74"/>
    </location>
</feature>
<feature type="glycosylation site" description="N-linked (GlcNAc...) asparagine" evidence="3 4">
    <location>
        <position position="34"/>
    </location>
</feature>
<feature type="disulfide bond" evidence="2">
    <location>
        <begin position="21"/>
        <end position="74"/>
    </location>
</feature>
<feature type="disulfide bond" evidence="2">
    <location>
        <begin position="31"/>
        <end position="57"/>
    </location>
</feature>
<feature type="disulfide bond" evidence="2">
    <location>
        <begin position="49"/>
        <end position="70"/>
    </location>
</feature>
<evidence type="ECO:0000255" key="1"/>
<evidence type="ECO:0000255" key="2">
    <source>
        <dbReference type="PROSITE-ProRule" id="PRU00031"/>
    </source>
</evidence>
<evidence type="ECO:0000269" key="3">
    <source>
    </source>
</evidence>
<evidence type="ECO:0000269" key="4">
    <source>
    </source>
</evidence>
<gene>
    <name type="ORF">C02F12.5</name>
</gene>
<dbReference type="EMBL" id="FO080254">
    <property type="protein sequence ID" value="CCD62378.1"/>
    <property type="molecule type" value="Genomic_DNA"/>
</dbReference>
<dbReference type="RefSeq" id="NP_508632.2">
    <property type="nucleotide sequence ID" value="NM_076231.4"/>
</dbReference>
<dbReference type="SMR" id="Q11101"/>
<dbReference type="FunCoup" id="Q11101">
    <property type="interactions" value="6"/>
</dbReference>
<dbReference type="STRING" id="6239.C02F12.5.1"/>
<dbReference type="iPTMnet" id="Q11101"/>
<dbReference type="PaxDb" id="6239-C02F12.5"/>
<dbReference type="PeptideAtlas" id="Q11101"/>
<dbReference type="EnsemblMetazoa" id="C02F12.5.1">
    <property type="protein sequence ID" value="C02F12.5.1"/>
    <property type="gene ID" value="WBGene00015355"/>
</dbReference>
<dbReference type="GeneID" id="180656"/>
<dbReference type="KEGG" id="cel:CELE_C02F12.5"/>
<dbReference type="UCSC" id="C02F12.5">
    <property type="organism name" value="c. elegans"/>
</dbReference>
<dbReference type="AGR" id="WB:WBGene00015355"/>
<dbReference type="CTD" id="180656"/>
<dbReference type="WormBase" id="C02F12.5">
    <property type="protein sequence ID" value="CE40681"/>
    <property type="gene ID" value="WBGene00015355"/>
</dbReference>
<dbReference type="eggNOG" id="KOG4295">
    <property type="taxonomic scope" value="Eukaryota"/>
</dbReference>
<dbReference type="GeneTree" id="ENSGT00970000196297"/>
<dbReference type="HOGENOM" id="CLU_105995_0_0_1"/>
<dbReference type="InParanoid" id="Q11101"/>
<dbReference type="OMA" id="CKPADQF"/>
<dbReference type="OrthoDB" id="4473401at2759"/>
<dbReference type="PhylomeDB" id="Q11101"/>
<dbReference type="PRO" id="PR:Q11101"/>
<dbReference type="Proteomes" id="UP000001940">
    <property type="component" value="Chromosome X"/>
</dbReference>
<dbReference type="Bgee" id="WBGene00015355">
    <property type="expression patterns" value="Expressed in adult organism and 2 other cell types or tissues"/>
</dbReference>
<dbReference type="GO" id="GO:0004867">
    <property type="term" value="F:serine-type endopeptidase inhibitor activity"/>
    <property type="evidence" value="ECO:0007669"/>
    <property type="project" value="UniProtKB-KW"/>
</dbReference>
<dbReference type="Gene3D" id="4.10.410.10">
    <property type="entry name" value="Pancreatic trypsin inhibitor Kunitz domain"/>
    <property type="match status" value="1"/>
</dbReference>
<dbReference type="InterPro" id="IPR052861">
    <property type="entry name" value="BPTI/Kunitz_domain"/>
</dbReference>
<dbReference type="InterPro" id="IPR002223">
    <property type="entry name" value="Kunitz_BPTI"/>
</dbReference>
<dbReference type="InterPro" id="IPR036880">
    <property type="entry name" value="Kunitz_BPTI_sf"/>
</dbReference>
<dbReference type="PANTHER" id="PTHR47248:SF8">
    <property type="entry name" value="BPTI_KUNITZ INHIBITOR DOMAIN-CONTAINING PROTEIN-RELATED"/>
    <property type="match status" value="1"/>
</dbReference>
<dbReference type="PANTHER" id="PTHR47248">
    <property type="entry name" value="PROTEIN CBG06772"/>
    <property type="match status" value="1"/>
</dbReference>
<dbReference type="Pfam" id="PF00014">
    <property type="entry name" value="Kunitz_BPTI"/>
    <property type="match status" value="1"/>
</dbReference>
<dbReference type="SMART" id="SM00131">
    <property type="entry name" value="KU"/>
    <property type="match status" value="1"/>
</dbReference>
<dbReference type="SUPFAM" id="SSF57362">
    <property type="entry name" value="BPTI-like"/>
    <property type="match status" value="1"/>
</dbReference>
<dbReference type="PROSITE" id="PS50279">
    <property type="entry name" value="BPTI_KUNITZ_2"/>
    <property type="match status" value="1"/>
</dbReference>
<accession>Q11101</accession>
<accession>A3FPJ1</accession>
<proteinExistence type="evidence at protein level"/>